<protein>
    <recommendedName>
        <fullName evidence="4">Mechanosensitive ion channel protein 8</fullName>
    </recommendedName>
    <alternativeName>
        <fullName evidence="4">Mechanosensitive channel of small conductance-like 8</fullName>
    </alternativeName>
    <alternativeName>
        <fullName evidence="4">MscS-Like protein 8</fullName>
    </alternativeName>
</protein>
<proteinExistence type="evidence at transcript level"/>
<feature type="chain" id="PRO_0000415330" description="Mechanosensitive ion channel protein 8">
    <location>
        <begin position="1"/>
        <end position="908"/>
    </location>
</feature>
<feature type="transmembrane region" description="Helical" evidence="1">
    <location>
        <begin position="298"/>
        <end position="318"/>
    </location>
</feature>
<feature type="transmembrane region" description="Helical" evidence="1">
    <location>
        <begin position="341"/>
        <end position="361"/>
    </location>
</feature>
<feature type="transmembrane region" description="Helical" evidence="1">
    <location>
        <begin position="381"/>
        <end position="401"/>
    </location>
</feature>
<feature type="transmembrane region" description="Helical" evidence="1">
    <location>
        <begin position="411"/>
        <end position="431"/>
    </location>
</feature>
<feature type="transmembrane region" description="Helical" evidence="1">
    <location>
        <begin position="673"/>
        <end position="693"/>
    </location>
</feature>
<feature type="transmembrane region" description="Helical" evidence="1">
    <location>
        <begin position="709"/>
        <end position="729"/>
    </location>
</feature>
<feature type="region of interest" description="Disordered" evidence="2">
    <location>
        <begin position="1"/>
        <end position="88"/>
    </location>
</feature>
<feature type="region of interest" description="Disordered" evidence="2">
    <location>
        <begin position="148"/>
        <end position="172"/>
    </location>
</feature>
<feature type="region of interest" description="Disordered" evidence="2">
    <location>
        <begin position="190"/>
        <end position="221"/>
    </location>
</feature>
<feature type="region of interest" description="Disordered" evidence="2">
    <location>
        <begin position="242"/>
        <end position="265"/>
    </location>
</feature>
<feature type="compositionally biased region" description="Polar residues" evidence="2">
    <location>
        <begin position="1"/>
        <end position="25"/>
    </location>
</feature>
<feature type="compositionally biased region" description="Basic and acidic residues" evidence="2">
    <location>
        <begin position="31"/>
        <end position="70"/>
    </location>
</feature>
<feature type="compositionally biased region" description="Polar residues" evidence="2">
    <location>
        <begin position="75"/>
        <end position="85"/>
    </location>
</feature>
<feature type="compositionally biased region" description="Polar residues" evidence="2">
    <location>
        <begin position="156"/>
        <end position="171"/>
    </location>
</feature>
<feature type="compositionally biased region" description="Low complexity" evidence="2">
    <location>
        <begin position="196"/>
        <end position="206"/>
    </location>
</feature>
<feature type="compositionally biased region" description="Polar residues" evidence="2">
    <location>
        <begin position="207"/>
        <end position="218"/>
    </location>
</feature>
<feature type="compositionally biased region" description="Basic and acidic residues" evidence="2">
    <location>
        <begin position="247"/>
        <end position="256"/>
    </location>
</feature>
<dbReference type="EMBL" id="CP002685">
    <property type="protein sequence ID" value="AEC06572.2"/>
    <property type="molecule type" value="Genomic_DNA"/>
</dbReference>
<dbReference type="RefSeq" id="NP_001318236.1">
    <property type="nucleotide sequence ID" value="NM_001335527.1"/>
</dbReference>
<dbReference type="SMR" id="F4IME2"/>
<dbReference type="FunCoup" id="F4IME2">
    <property type="interactions" value="12"/>
</dbReference>
<dbReference type="STRING" id="3702.F4IME2"/>
<dbReference type="TCDB" id="1.A.23.4.7">
    <property type="family name" value="the small conductance mechanosensitive ion channel (mscs) family"/>
</dbReference>
<dbReference type="ProteomicsDB" id="239008"/>
<dbReference type="EnsemblPlants" id="AT2G17010.1">
    <property type="protein sequence ID" value="AT2G17010.1"/>
    <property type="gene ID" value="AT2G17010"/>
</dbReference>
<dbReference type="GeneID" id="816204"/>
<dbReference type="Gramene" id="AT2G17010.1">
    <property type="protein sequence ID" value="AT2G17010.1"/>
    <property type="gene ID" value="AT2G17010"/>
</dbReference>
<dbReference type="KEGG" id="ath:AT2G17010"/>
<dbReference type="Araport" id="AT2G17010"/>
<dbReference type="TAIR" id="AT2G17010">
    <property type="gene designation" value="MSL8"/>
</dbReference>
<dbReference type="eggNOG" id="KOG4629">
    <property type="taxonomic scope" value="Eukaryota"/>
</dbReference>
<dbReference type="InParanoid" id="F4IME2"/>
<dbReference type="OMA" id="WHYLLDE"/>
<dbReference type="PRO" id="PR:F4IME2"/>
<dbReference type="Proteomes" id="UP000006548">
    <property type="component" value="Chromosome 2"/>
</dbReference>
<dbReference type="ExpressionAtlas" id="F4IME2">
    <property type="expression patterns" value="baseline and differential"/>
</dbReference>
<dbReference type="GO" id="GO:0012505">
    <property type="term" value="C:endomembrane system"/>
    <property type="evidence" value="ECO:0007669"/>
    <property type="project" value="UniProtKB-SubCell"/>
</dbReference>
<dbReference type="GO" id="GO:0005886">
    <property type="term" value="C:plasma membrane"/>
    <property type="evidence" value="ECO:0007669"/>
    <property type="project" value="UniProtKB-SubCell"/>
</dbReference>
<dbReference type="GO" id="GO:0034220">
    <property type="term" value="P:monoatomic ion transmembrane transport"/>
    <property type="evidence" value="ECO:0007669"/>
    <property type="project" value="UniProtKB-KW"/>
</dbReference>
<dbReference type="FunFam" id="2.30.30.60:FF:000003">
    <property type="entry name" value="Predicted mechanosensitive ion channel"/>
    <property type="match status" value="1"/>
</dbReference>
<dbReference type="Gene3D" id="2.30.30.60">
    <property type="match status" value="1"/>
</dbReference>
<dbReference type="InterPro" id="IPR010920">
    <property type="entry name" value="LSM_dom_sf"/>
</dbReference>
<dbReference type="InterPro" id="IPR016688">
    <property type="entry name" value="MscS-like_plants/fungi"/>
</dbReference>
<dbReference type="InterPro" id="IPR023408">
    <property type="entry name" value="MscS_beta-dom_sf"/>
</dbReference>
<dbReference type="InterPro" id="IPR006685">
    <property type="entry name" value="MscS_channel_2nd"/>
</dbReference>
<dbReference type="PANTHER" id="PTHR31618">
    <property type="entry name" value="MECHANOSENSITIVE ION CHANNEL PROTEIN 5"/>
    <property type="match status" value="1"/>
</dbReference>
<dbReference type="PANTHER" id="PTHR31618:SF24">
    <property type="entry name" value="MECHANOSENSITIVE ION CHANNEL PROTEIN 8"/>
    <property type="match status" value="1"/>
</dbReference>
<dbReference type="Pfam" id="PF00924">
    <property type="entry name" value="MS_channel_2nd"/>
    <property type="match status" value="1"/>
</dbReference>
<dbReference type="PIRSF" id="PIRSF017209">
    <property type="entry name" value="Memb_At2g17000_prd"/>
    <property type="match status" value="1"/>
</dbReference>
<dbReference type="SUPFAM" id="SSF50182">
    <property type="entry name" value="Sm-like ribonucleoproteins"/>
    <property type="match status" value="1"/>
</dbReference>
<gene>
    <name evidence="4" type="primary">MSL8</name>
    <name evidence="6" type="ordered locus">At2g17010</name>
    <name evidence="7" type="ORF">F6P23.17</name>
</gene>
<reference key="1">
    <citation type="journal article" date="1999" name="Nature">
        <title>Sequence and analysis of chromosome 2 of the plant Arabidopsis thaliana.</title>
        <authorList>
            <person name="Lin X."/>
            <person name="Kaul S."/>
            <person name="Rounsley S.D."/>
            <person name="Shea T.P."/>
            <person name="Benito M.-I."/>
            <person name="Town C.D."/>
            <person name="Fujii C.Y."/>
            <person name="Mason T.M."/>
            <person name="Bowman C.L."/>
            <person name="Barnstead M.E."/>
            <person name="Feldblyum T.V."/>
            <person name="Buell C.R."/>
            <person name="Ketchum K.A."/>
            <person name="Lee J.J."/>
            <person name="Ronning C.M."/>
            <person name="Koo H.L."/>
            <person name="Moffat K.S."/>
            <person name="Cronin L.A."/>
            <person name="Shen M."/>
            <person name="Pai G."/>
            <person name="Van Aken S."/>
            <person name="Umayam L."/>
            <person name="Tallon L.J."/>
            <person name="Gill J.E."/>
            <person name="Adams M.D."/>
            <person name="Carrera A.J."/>
            <person name="Creasy T.H."/>
            <person name="Goodman H.M."/>
            <person name="Somerville C.R."/>
            <person name="Copenhaver G.P."/>
            <person name="Preuss D."/>
            <person name="Nierman W.C."/>
            <person name="White O."/>
            <person name="Eisen J.A."/>
            <person name="Salzberg S.L."/>
            <person name="Fraser C.M."/>
            <person name="Venter J.C."/>
        </authorList>
    </citation>
    <scope>NUCLEOTIDE SEQUENCE [LARGE SCALE GENOMIC DNA]</scope>
    <source>
        <strain>cv. Columbia</strain>
    </source>
</reference>
<reference key="2">
    <citation type="journal article" date="2017" name="Plant J.">
        <title>Araport11: a complete reannotation of the Arabidopsis thaliana reference genome.</title>
        <authorList>
            <person name="Cheng C.Y."/>
            <person name="Krishnakumar V."/>
            <person name="Chan A.P."/>
            <person name="Thibaud-Nissen F."/>
            <person name="Schobel S."/>
            <person name="Town C.D."/>
        </authorList>
    </citation>
    <scope>GENOME REANNOTATION</scope>
    <source>
        <strain>cv. Columbia</strain>
    </source>
</reference>
<reference key="3">
    <citation type="journal article" date="2003" name="Microbiol. Mol. Biol. Rev.">
        <title>Two families of mechanosensitive channel proteins.</title>
        <authorList>
            <person name="Pivetti C.D."/>
            <person name="Yen M.R."/>
            <person name="Miller S."/>
            <person name="Busch W."/>
            <person name="Tseng Y.H."/>
            <person name="Booth I.R."/>
            <person name="Saier M.H. Jr."/>
        </authorList>
    </citation>
    <scope>GENE FAMILY</scope>
</reference>
<reference key="4">
    <citation type="book" date="2007" name="Mechanosensitive Ion Channels, Part A">
        <title>MscS-like proteins in plants.</title>
        <editorList>
            <person name="Hamill O.P."/>
        </editorList>
        <authorList>
            <person name="Haswell E.S."/>
        </authorList>
    </citation>
    <scope>REVIEW</scope>
    <scope>GENE FAMILY</scope>
    <scope>NOMENCLATURE</scope>
</reference>
<reference key="5">
    <citation type="journal article" date="2015" name="Science">
        <title>Mechanosensitive channel MSL8 regulates osmotic forces during pollen hydration and germination.</title>
        <authorList>
            <person name="Hamilton E.S."/>
            <person name="Jensen G.S."/>
            <person name="Maksaev G."/>
            <person name="Katims A."/>
            <person name="Sherp A.M."/>
            <person name="Haswell E.S."/>
        </authorList>
    </citation>
    <scope>FUNCTION</scope>
    <scope>BIOPHYSICOCHEMICAL PROPERTIES</scope>
    <scope>ACTIVITY REGULATION</scope>
    <scope>TISSUE SPECIFICITY</scope>
    <scope>DISRUPTION PHENOTYPE</scope>
</reference>
<evidence type="ECO:0000255" key="1"/>
<evidence type="ECO:0000256" key="2">
    <source>
        <dbReference type="SAM" id="MobiDB-lite"/>
    </source>
</evidence>
<evidence type="ECO:0000269" key="3">
    <source>
    </source>
</evidence>
<evidence type="ECO:0000303" key="4">
    <source ref="4"/>
</evidence>
<evidence type="ECO:0000305" key="5"/>
<evidence type="ECO:0000312" key="6">
    <source>
        <dbReference type="Araport" id="AT2G17010"/>
    </source>
</evidence>
<evidence type="ECO:0000312" key="7">
    <source>
        <dbReference type="EMBL" id="AEC06572.2"/>
    </source>
</evidence>
<comment type="function">
    <text evidence="3">Mechanosensitive channel that opens in response to stretch forces in the membrane lipid bilayer. Exhibits a 6.3-fold preference for chloride over sodium. Regulates osmotic forces during pollen hydration and germination.</text>
</comment>
<comment type="activity regulation">
    <text evidence="3">Not regulated by MgCl(2), ruthenium red or tetramethylammonium-Cl.</text>
</comment>
<comment type="biophysicochemical properties">
    <kinetics>
        <text evidence="3">Has a unitary conductance of 57 pS under negative membrane potentials and 39 pS under positive membrane potentials, and a gating threshold pressure of -48.2 mm Hg.</text>
    </kinetics>
</comment>
<comment type="subcellular location">
    <subcellularLocation>
        <location evidence="3">Cell membrane</location>
        <topology evidence="1">Multi-pass membrane protein</topology>
    </subcellularLocation>
    <subcellularLocation>
        <location evidence="3">Endomembrane system</location>
        <topology evidence="1">Multi-pass membrane protein</topology>
    </subcellularLocation>
</comment>
<comment type="tissue specificity">
    <text evidence="3">Expressed in tricellular and mature pollen, and in germinating tube. Not detected in leaves or roots.</text>
</comment>
<comment type="disruption phenotype">
    <text evidence="3">No visible morphological defects in the coat or cell wall of desiccated pollen grains, but strongly decreased viability during rehydration.</text>
</comment>
<comment type="similarity">
    <text evidence="5">Belongs to the MscS (TC 1.A.23) family.</text>
</comment>
<accession>F4IME2</accession>
<sequence>MDFRNSFKSHSSYKQIRSPGDQSEPSPEHLPILHDHHPDHSGMVVDDQKPDSTRSSLDDGRNAPVERDASYKFWQDNTTGTSTDHTAVRTSDKDPIAISRKGDRLSGSFDFVHGKLPVDESPTKMVAGEPVNRQWRGRNNEEITLDVDQENDDVSHQTMPTPTSTARTSFDASREMRVSFNVRRAGGAFVAGSVPSSSSHSSSSSSATMRTNQDQPQLQEEEVVRCTSNMSFQRKSELISRVKTRSRLQDPPREEETPYSGWRSGQLKSGLLADIDEEDDPLAEEDVPDEYKRGKLDAITLLQWLSLVAIIAALACSLSIQSWKKVRVWNLHLWKWEVFLLVLICGRLVSGWGIRIVVFFIERNFLLRKRVLYFVYGVRRAVQNCLWLGLVLLAWHFLFDKKVQRETRSRFLPYVTKILVCFLLSTILWLIKTLVVKVLASSFHVSTYFDRIQEALFNQYVIETLSGPPMIEMSRIEEEEERAQDEIFKMQNAGANLPPDLCAAAFPPGKSGRVMNPKLSPIIPKSTTDNGISMEHLHRMNHKNISAWNMKRLMKIVRNVSLTTLDEQMLESTYEDESTRQIRSEKEAKAAARKIFKNVEQRGAKYIYLEDLMRFLREDEAMKTMGLFEGAPENKRISKSALKNWLVNAFRERRALALTLNDTKTAVNKLHHMINIVTAIVIVVIWLVLLEIASSKVLLFVSSQVVLLAFIFGNTVKTVFESIIFLFIVHPYDVGDRCEIDSVQLVVEEMNILTTVFLRYDNLKIMYPNSLLWQKSINNYYRSPDMGDAIEFCVHITTPLEKISVIKQRISNYIDNKPEYWYPQAKIIVKDLEDLHIVRLAIWPCHRINHQDMAERWTRRAVLVEEVIKILLELDIQHRFYPLDINVRTMPTVVSSRVPPGWSQNQPA</sequence>
<keyword id="KW-1003">Cell membrane</keyword>
<keyword id="KW-0407">Ion channel</keyword>
<keyword id="KW-0406">Ion transport</keyword>
<keyword id="KW-0472">Membrane</keyword>
<keyword id="KW-1185">Reference proteome</keyword>
<keyword id="KW-0812">Transmembrane</keyword>
<keyword id="KW-1133">Transmembrane helix</keyword>
<keyword id="KW-0813">Transport</keyword>
<organism>
    <name type="scientific">Arabidopsis thaliana</name>
    <name type="common">Mouse-ear cress</name>
    <dbReference type="NCBI Taxonomy" id="3702"/>
    <lineage>
        <taxon>Eukaryota</taxon>
        <taxon>Viridiplantae</taxon>
        <taxon>Streptophyta</taxon>
        <taxon>Embryophyta</taxon>
        <taxon>Tracheophyta</taxon>
        <taxon>Spermatophyta</taxon>
        <taxon>Magnoliopsida</taxon>
        <taxon>eudicotyledons</taxon>
        <taxon>Gunneridae</taxon>
        <taxon>Pentapetalae</taxon>
        <taxon>rosids</taxon>
        <taxon>malvids</taxon>
        <taxon>Brassicales</taxon>
        <taxon>Brassicaceae</taxon>
        <taxon>Camelineae</taxon>
        <taxon>Arabidopsis</taxon>
    </lineage>
</organism>
<name>MSL8_ARATH</name>